<sequence length="323" mass="35789">MAETTWNRHHVLSLADFSADELNIVLQTANSFKDVLYRKTKKVPTLQARLVTNLFFEPSTRTRSSFELAAKRLSADVLNFSPGTSSLSKGETILDTAKTFLAMGADMMVIRHQHSGVPQMIAQAMDDLGEQVGVLNAGDGFHEHPSQGLLDLFTLCTTLDPDQPTTHLLTGKKIAIVGDILHSRVARSNLSSLVTCGADVHLAGPPTLLPKEFADYGAQVHWSLEPALEQADFVMTLRLQHERMSQHLIPSIREYHQQFGITRDRIQRCQPQVKVLHPGPVNRGVEISSDLMDDESLSLIPHQVTSGIAVRMALLYLISNRSR</sequence>
<proteinExistence type="inferred from homology"/>
<protein>
    <recommendedName>
        <fullName evidence="1">Aspartate carbamoyltransferase catalytic subunit</fullName>
        <ecNumber evidence="1">2.1.3.2</ecNumber>
    </recommendedName>
    <alternativeName>
        <fullName evidence="1">Aspartate transcarbamylase</fullName>
        <shortName evidence="1">ATCase</shortName>
    </alternativeName>
</protein>
<accession>B0CED7</accession>
<reference key="1">
    <citation type="journal article" date="2008" name="Proc. Natl. Acad. Sci. U.S.A.">
        <title>Niche adaptation and genome expansion in the chlorophyll d-producing cyanobacterium Acaryochloris marina.</title>
        <authorList>
            <person name="Swingley W.D."/>
            <person name="Chen M."/>
            <person name="Cheung P.C."/>
            <person name="Conrad A.L."/>
            <person name="Dejesa L.C."/>
            <person name="Hao J."/>
            <person name="Honchak B.M."/>
            <person name="Karbach L.E."/>
            <person name="Kurdoglu A."/>
            <person name="Lahiri S."/>
            <person name="Mastrian S.D."/>
            <person name="Miyashita H."/>
            <person name="Page L."/>
            <person name="Ramakrishna P."/>
            <person name="Satoh S."/>
            <person name="Sattley W.M."/>
            <person name="Shimada Y."/>
            <person name="Taylor H.L."/>
            <person name="Tomo T."/>
            <person name="Tsuchiya T."/>
            <person name="Wang Z.T."/>
            <person name="Raymond J."/>
            <person name="Mimuro M."/>
            <person name="Blankenship R.E."/>
            <person name="Touchman J.W."/>
        </authorList>
    </citation>
    <scope>NUCLEOTIDE SEQUENCE [LARGE SCALE GENOMIC DNA]</scope>
    <source>
        <strain>MBIC 11017</strain>
    </source>
</reference>
<evidence type="ECO:0000255" key="1">
    <source>
        <dbReference type="HAMAP-Rule" id="MF_00001"/>
    </source>
</evidence>
<dbReference type="EC" id="2.1.3.2" evidence="1"/>
<dbReference type="EMBL" id="CP000828">
    <property type="protein sequence ID" value="ABW26903.1"/>
    <property type="molecule type" value="Genomic_DNA"/>
</dbReference>
<dbReference type="RefSeq" id="WP_012162405.1">
    <property type="nucleotide sequence ID" value="NC_009925.1"/>
</dbReference>
<dbReference type="SMR" id="B0CED7"/>
<dbReference type="STRING" id="329726.AM1_1883"/>
<dbReference type="KEGG" id="amr:AM1_1883"/>
<dbReference type="eggNOG" id="COG0540">
    <property type="taxonomic scope" value="Bacteria"/>
</dbReference>
<dbReference type="HOGENOM" id="CLU_043846_2_0_3"/>
<dbReference type="OrthoDB" id="9774690at2"/>
<dbReference type="UniPathway" id="UPA00070">
    <property type="reaction ID" value="UER00116"/>
</dbReference>
<dbReference type="Proteomes" id="UP000000268">
    <property type="component" value="Chromosome"/>
</dbReference>
<dbReference type="GO" id="GO:0005829">
    <property type="term" value="C:cytosol"/>
    <property type="evidence" value="ECO:0007669"/>
    <property type="project" value="TreeGrafter"/>
</dbReference>
<dbReference type="GO" id="GO:0016597">
    <property type="term" value="F:amino acid binding"/>
    <property type="evidence" value="ECO:0007669"/>
    <property type="project" value="InterPro"/>
</dbReference>
<dbReference type="GO" id="GO:0004070">
    <property type="term" value="F:aspartate carbamoyltransferase activity"/>
    <property type="evidence" value="ECO:0007669"/>
    <property type="project" value="UniProtKB-UniRule"/>
</dbReference>
<dbReference type="GO" id="GO:0006207">
    <property type="term" value="P:'de novo' pyrimidine nucleobase biosynthetic process"/>
    <property type="evidence" value="ECO:0007669"/>
    <property type="project" value="InterPro"/>
</dbReference>
<dbReference type="GO" id="GO:0044205">
    <property type="term" value="P:'de novo' UMP biosynthetic process"/>
    <property type="evidence" value="ECO:0007669"/>
    <property type="project" value="UniProtKB-UniRule"/>
</dbReference>
<dbReference type="GO" id="GO:0006520">
    <property type="term" value="P:amino acid metabolic process"/>
    <property type="evidence" value="ECO:0007669"/>
    <property type="project" value="InterPro"/>
</dbReference>
<dbReference type="FunFam" id="3.40.50.1370:FF:000007">
    <property type="entry name" value="Aspartate carbamoyltransferase"/>
    <property type="match status" value="1"/>
</dbReference>
<dbReference type="Gene3D" id="3.40.50.1370">
    <property type="entry name" value="Aspartate/ornithine carbamoyltransferase"/>
    <property type="match status" value="2"/>
</dbReference>
<dbReference type="HAMAP" id="MF_00001">
    <property type="entry name" value="Asp_carb_tr"/>
    <property type="match status" value="1"/>
</dbReference>
<dbReference type="InterPro" id="IPR006132">
    <property type="entry name" value="Asp/Orn_carbamoyltranf_P-bd"/>
</dbReference>
<dbReference type="InterPro" id="IPR006130">
    <property type="entry name" value="Asp/Orn_carbamoylTrfase"/>
</dbReference>
<dbReference type="InterPro" id="IPR036901">
    <property type="entry name" value="Asp/Orn_carbamoylTrfase_sf"/>
</dbReference>
<dbReference type="InterPro" id="IPR002082">
    <property type="entry name" value="Asp_carbamoyltransf"/>
</dbReference>
<dbReference type="InterPro" id="IPR006131">
    <property type="entry name" value="Asp_carbamoyltransf_Asp/Orn-bd"/>
</dbReference>
<dbReference type="NCBIfam" id="TIGR00670">
    <property type="entry name" value="asp_carb_tr"/>
    <property type="match status" value="1"/>
</dbReference>
<dbReference type="NCBIfam" id="NF002032">
    <property type="entry name" value="PRK00856.1"/>
    <property type="match status" value="1"/>
</dbReference>
<dbReference type="PANTHER" id="PTHR45753:SF6">
    <property type="entry name" value="ASPARTATE CARBAMOYLTRANSFERASE"/>
    <property type="match status" value="1"/>
</dbReference>
<dbReference type="PANTHER" id="PTHR45753">
    <property type="entry name" value="ORNITHINE CARBAMOYLTRANSFERASE, MITOCHONDRIAL"/>
    <property type="match status" value="1"/>
</dbReference>
<dbReference type="Pfam" id="PF00185">
    <property type="entry name" value="OTCace"/>
    <property type="match status" value="1"/>
</dbReference>
<dbReference type="Pfam" id="PF02729">
    <property type="entry name" value="OTCace_N"/>
    <property type="match status" value="1"/>
</dbReference>
<dbReference type="PRINTS" id="PR00100">
    <property type="entry name" value="AOTCASE"/>
</dbReference>
<dbReference type="PRINTS" id="PR00101">
    <property type="entry name" value="ATCASE"/>
</dbReference>
<dbReference type="SUPFAM" id="SSF53671">
    <property type="entry name" value="Aspartate/ornithine carbamoyltransferase"/>
    <property type="match status" value="1"/>
</dbReference>
<dbReference type="PROSITE" id="PS00097">
    <property type="entry name" value="CARBAMOYLTRANSFERASE"/>
    <property type="match status" value="1"/>
</dbReference>
<keyword id="KW-0665">Pyrimidine biosynthesis</keyword>
<keyword id="KW-1185">Reference proteome</keyword>
<keyword id="KW-0808">Transferase</keyword>
<gene>
    <name evidence="1" type="primary">pyrB</name>
    <name type="ordered locus">AM1_1883</name>
</gene>
<name>PYRB_ACAM1</name>
<feature type="chain" id="PRO_1000073718" description="Aspartate carbamoyltransferase catalytic subunit">
    <location>
        <begin position="1"/>
        <end position="323"/>
    </location>
</feature>
<feature type="binding site" evidence="1">
    <location>
        <position position="61"/>
    </location>
    <ligand>
        <name>carbamoyl phosphate</name>
        <dbReference type="ChEBI" id="CHEBI:58228"/>
    </ligand>
</feature>
<feature type="binding site" evidence="1">
    <location>
        <position position="62"/>
    </location>
    <ligand>
        <name>carbamoyl phosphate</name>
        <dbReference type="ChEBI" id="CHEBI:58228"/>
    </ligand>
</feature>
<feature type="binding site" evidence="1">
    <location>
        <position position="89"/>
    </location>
    <ligand>
        <name>L-aspartate</name>
        <dbReference type="ChEBI" id="CHEBI:29991"/>
    </ligand>
</feature>
<feature type="binding site" evidence="1">
    <location>
        <position position="111"/>
    </location>
    <ligand>
        <name>carbamoyl phosphate</name>
        <dbReference type="ChEBI" id="CHEBI:58228"/>
    </ligand>
</feature>
<feature type="binding site" evidence="1">
    <location>
        <position position="144"/>
    </location>
    <ligand>
        <name>carbamoyl phosphate</name>
        <dbReference type="ChEBI" id="CHEBI:58228"/>
    </ligand>
</feature>
<feature type="binding site" evidence="1">
    <location>
        <position position="147"/>
    </location>
    <ligand>
        <name>carbamoyl phosphate</name>
        <dbReference type="ChEBI" id="CHEBI:58228"/>
    </ligand>
</feature>
<feature type="binding site" evidence="1">
    <location>
        <position position="184"/>
    </location>
    <ligand>
        <name>L-aspartate</name>
        <dbReference type="ChEBI" id="CHEBI:29991"/>
    </ligand>
</feature>
<feature type="binding site" evidence="1">
    <location>
        <position position="238"/>
    </location>
    <ligand>
        <name>L-aspartate</name>
        <dbReference type="ChEBI" id="CHEBI:29991"/>
    </ligand>
</feature>
<feature type="binding site" evidence="1">
    <location>
        <position position="279"/>
    </location>
    <ligand>
        <name>carbamoyl phosphate</name>
        <dbReference type="ChEBI" id="CHEBI:58228"/>
    </ligand>
</feature>
<feature type="binding site" evidence="1">
    <location>
        <position position="280"/>
    </location>
    <ligand>
        <name>carbamoyl phosphate</name>
        <dbReference type="ChEBI" id="CHEBI:58228"/>
    </ligand>
</feature>
<organism>
    <name type="scientific">Acaryochloris marina (strain MBIC 11017)</name>
    <dbReference type="NCBI Taxonomy" id="329726"/>
    <lineage>
        <taxon>Bacteria</taxon>
        <taxon>Bacillati</taxon>
        <taxon>Cyanobacteriota</taxon>
        <taxon>Cyanophyceae</taxon>
        <taxon>Acaryochloridales</taxon>
        <taxon>Acaryochloridaceae</taxon>
        <taxon>Acaryochloris</taxon>
    </lineage>
</organism>
<comment type="function">
    <text evidence="1">Catalyzes the condensation of carbamoyl phosphate and aspartate to form carbamoyl aspartate and inorganic phosphate, the committed step in the de novo pyrimidine nucleotide biosynthesis pathway.</text>
</comment>
<comment type="catalytic activity">
    <reaction evidence="1">
        <text>carbamoyl phosphate + L-aspartate = N-carbamoyl-L-aspartate + phosphate + H(+)</text>
        <dbReference type="Rhea" id="RHEA:20013"/>
        <dbReference type="ChEBI" id="CHEBI:15378"/>
        <dbReference type="ChEBI" id="CHEBI:29991"/>
        <dbReference type="ChEBI" id="CHEBI:32814"/>
        <dbReference type="ChEBI" id="CHEBI:43474"/>
        <dbReference type="ChEBI" id="CHEBI:58228"/>
        <dbReference type="EC" id="2.1.3.2"/>
    </reaction>
</comment>
<comment type="pathway">
    <text evidence="1">Pyrimidine metabolism; UMP biosynthesis via de novo pathway; (S)-dihydroorotate from bicarbonate: step 2/3.</text>
</comment>
<comment type="subunit">
    <text evidence="1">Heterododecamer (2C3:3R2) of six catalytic PyrB chains organized as two trimers (C3), and six regulatory PyrI chains organized as three dimers (R2).</text>
</comment>
<comment type="similarity">
    <text evidence="1">Belongs to the aspartate/ornithine carbamoyltransferase superfamily. ATCase family.</text>
</comment>